<accession>Q0TLN9</accession>
<name>YACG_ECOL5</name>
<proteinExistence type="inferred from homology"/>
<keyword id="KW-0479">Metal-binding</keyword>
<keyword id="KW-0862">Zinc</keyword>
<reference key="1">
    <citation type="journal article" date="2006" name="Mol. Microbiol.">
        <title>Role of pathogenicity island-associated integrases in the genome plasticity of uropathogenic Escherichia coli strain 536.</title>
        <authorList>
            <person name="Hochhut B."/>
            <person name="Wilde C."/>
            <person name="Balling G."/>
            <person name="Middendorf B."/>
            <person name="Dobrindt U."/>
            <person name="Brzuszkiewicz E."/>
            <person name="Gottschalk G."/>
            <person name="Carniel E."/>
            <person name="Hacker J."/>
        </authorList>
    </citation>
    <scope>NUCLEOTIDE SEQUENCE [LARGE SCALE GENOMIC DNA]</scope>
    <source>
        <strain>536 / UPEC</strain>
    </source>
</reference>
<protein>
    <recommendedName>
        <fullName evidence="1">DNA gyrase inhibitor YacG</fullName>
    </recommendedName>
</protein>
<sequence length="65" mass="7306">MSETITVNCPTCGKTVVWGEISPFRPFCSKRCQLIDLGEWAAEEKRIPSSGDLSESDDWSEEPKQ</sequence>
<dbReference type="EMBL" id="CP000247">
    <property type="protein sequence ID" value="ABG68142.1"/>
    <property type="molecule type" value="Genomic_DNA"/>
</dbReference>
<dbReference type="RefSeq" id="WP_000005042.1">
    <property type="nucleotide sequence ID" value="NC_008253.1"/>
</dbReference>
<dbReference type="SMR" id="Q0TLN9"/>
<dbReference type="GeneID" id="93777334"/>
<dbReference type="KEGG" id="ecp:ECP_0102"/>
<dbReference type="HOGENOM" id="CLU_178280_3_1_6"/>
<dbReference type="Proteomes" id="UP000009182">
    <property type="component" value="Chromosome"/>
</dbReference>
<dbReference type="GO" id="GO:0008657">
    <property type="term" value="F:DNA topoisomerase type II (double strand cut, ATP-hydrolyzing) inhibitor activity"/>
    <property type="evidence" value="ECO:0007669"/>
    <property type="project" value="UniProtKB-UniRule"/>
</dbReference>
<dbReference type="GO" id="GO:0008270">
    <property type="term" value="F:zinc ion binding"/>
    <property type="evidence" value="ECO:0007669"/>
    <property type="project" value="UniProtKB-UniRule"/>
</dbReference>
<dbReference type="GO" id="GO:0006355">
    <property type="term" value="P:regulation of DNA-templated transcription"/>
    <property type="evidence" value="ECO:0007669"/>
    <property type="project" value="InterPro"/>
</dbReference>
<dbReference type="FunFam" id="3.30.50.10:FF:000026">
    <property type="entry name" value="DNA gyrase inhibitor YacG"/>
    <property type="match status" value="1"/>
</dbReference>
<dbReference type="Gene3D" id="3.30.50.10">
    <property type="entry name" value="Erythroid Transcription Factor GATA-1, subunit A"/>
    <property type="match status" value="1"/>
</dbReference>
<dbReference type="HAMAP" id="MF_00649">
    <property type="entry name" value="DNA_gyrase_inhibitor_YacG"/>
    <property type="match status" value="1"/>
</dbReference>
<dbReference type="InterPro" id="IPR005584">
    <property type="entry name" value="DNA_gyrase_inhibitor_YacG"/>
</dbReference>
<dbReference type="InterPro" id="IPR013088">
    <property type="entry name" value="Znf_NHR/GATA"/>
</dbReference>
<dbReference type="NCBIfam" id="NF001638">
    <property type="entry name" value="PRK00418.1"/>
    <property type="match status" value="1"/>
</dbReference>
<dbReference type="PANTHER" id="PTHR36150">
    <property type="entry name" value="DNA GYRASE INHIBITOR YACG"/>
    <property type="match status" value="1"/>
</dbReference>
<dbReference type="PANTHER" id="PTHR36150:SF1">
    <property type="entry name" value="DNA GYRASE INHIBITOR YACG"/>
    <property type="match status" value="1"/>
</dbReference>
<dbReference type="Pfam" id="PF03884">
    <property type="entry name" value="YacG"/>
    <property type="match status" value="1"/>
</dbReference>
<dbReference type="SUPFAM" id="SSF57716">
    <property type="entry name" value="Glucocorticoid receptor-like (DNA-binding domain)"/>
    <property type="match status" value="1"/>
</dbReference>
<organism>
    <name type="scientific">Escherichia coli O6:K15:H31 (strain 536 / UPEC)</name>
    <dbReference type="NCBI Taxonomy" id="362663"/>
    <lineage>
        <taxon>Bacteria</taxon>
        <taxon>Pseudomonadati</taxon>
        <taxon>Pseudomonadota</taxon>
        <taxon>Gammaproteobacteria</taxon>
        <taxon>Enterobacterales</taxon>
        <taxon>Enterobacteriaceae</taxon>
        <taxon>Escherichia</taxon>
    </lineage>
</organism>
<gene>
    <name evidence="1" type="primary">yacG</name>
    <name type="ordered locus">ECP_0102</name>
</gene>
<feature type="chain" id="PRO_1000056971" description="DNA gyrase inhibitor YacG">
    <location>
        <begin position="1"/>
        <end position="65"/>
    </location>
</feature>
<feature type="region of interest" description="Disordered" evidence="2">
    <location>
        <begin position="45"/>
        <end position="65"/>
    </location>
</feature>
<feature type="compositionally biased region" description="Acidic residues" evidence="2">
    <location>
        <begin position="54"/>
        <end position="65"/>
    </location>
</feature>
<feature type="binding site" evidence="1">
    <location>
        <position position="9"/>
    </location>
    <ligand>
        <name>Zn(2+)</name>
        <dbReference type="ChEBI" id="CHEBI:29105"/>
    </ligand>
</feature>
<feature type="binding site" evidence="1">
    <location>
        <position position="12"/>
    </location>
    <ligand>
        <name>Zn(2+)</name>
        <dbReference type="ChEBI" id="CHEBI:29105"/>
    </ligand>
</feature>
<feature type="binding site" evidence="1">
    <location>
        <position position="28"/>
    </location>
    <ligand>
        <name>Zn(2+)</name>
        <dbReference type="ChEBI" id="CHEBI:29105"/>
    </ligand>
</feature>
<feature type="binding site" evidence="1">
    <location>
        <position position="32"/>
    </location>
    <ligand>
        <name>Zn(2+)</name>
        <dbReference type="ChEBI" id="CHEBI:29105"/>
    </ligand>
</feature>
<comment type="function">
    <text evidence="1">Inhibits all the catalytic activities of DNA gyrase by preventing its interaction with DNA. Acts by binding directly to the C-terminal domain of GyrB, which probably disrupts DNA binding by the gyrase.</text>
</comment>
<comment type="cofactor">
    <cofactor evidence="1">
        <name>Zn(2+)</name>
        <dbReference type="ChEBI" id="CHEBI:29105"/>
    </cofactor>
    <text evidence="1">Binds 1 zinc ion.</text>
</comment>
<comment type="subunit">
    <text evidence="1">Interacts with GyrB.</text>
</comment>
<comment type="similarity">
    <text evidence="1">Belongs to the DNA gyrase inhibitor YacG family.</text>
</comment>
<evidence type="ECO:0000255" key="1">
    <source>
        <dbReference type="HAMAP-Rule" id="MF_00649"/>
    </source>
</evidence>
<evidence type="ECO:0000256" key="2">
    <source>
        <dbReference type="SAM" id="MobiDB-lite"/>
    </source>
</evidence>